<name>FIBA_BUBBU</name>
<keyword id="KW-1064">Adaptive immunity</keyword>
<keyword id="KW-0094">Blood coagulation</keyword>
<keyword id="KW-0175">Coiled coil</keyword>
<keyword id="KW-0903">Direct protein sequencing</keyword>
<keyword id="KW-1015">Disulfide bond</keyword>
<keyword id="KW-0356">Hemostasis</keyword>
<keyword id="KW-0391">Immunity</keyword>
<keyword id="KW-0399">Innate immunity</keyword>
<keyword id="KW-0964">Secreted</keyword>
<organism>
    <name type="scientific">Bubalus bubalis</name>
    <name type="common">Domestic water buffalo</name>
    <dbReference type="NCBI Taxonomy" id="89462"/>
    <lineage>
        <taxon>Eukaryota</taxon>
        <taxon>Metazoa</taxon>
        <taxon>Chordata</taxon>
        <taxon>Craniata</taxon>
        <taxon>Vertebrata</taxon>
        <taxon>Euteleostomi</taxon>
        <taxon>Mammalia</taxon>
        <taxon>Eutheria</taxon>
        <taxon>Laurasiatheria</taxon>
        <taxon>Artiodactyla</taxon>
        <taxon>Ruminantia</taxon>
        <taxon>Pecora</taxon>
        <taxon>Bovidae</taxon>
        <taxon>Bovinae</taxon>
        <taxon>Bubalus</taxon>
    </lineage>
</organism>
<accession>P14442</accession>
<accession>P14443</accession>
<reference key="1">
    <citation type="journal article" date="1967" name="Arch. Biochem. Biophys.">
        <title>Amino acid sequence studies on artiodacty fibrinopeptides.</title>
        <authorList>
            <person name="Mross G.A."/>
            <person name="Doolittle R.F."/>
        </authorList>
    </citation>
    <scope>PROTEIN SEQUENCE</scope>
</reference>
<reference key="2">
    <citation type="journal article" date="1975" name="Biochim. Biophys. Acta">
        <title>Covalent structure of fibrinopeptides from buffaloes breeding in Italy.</title>
        <authorList>
            <person name="Balestrieri C."/>
            <person name="Colonna G."/>
            <person name="Irace G."/>
        </authorList>
    </citation>
    <scope>PROTEIN SEQUENCE</scope>
    <source>
        <strain>Italian breed</strain>
    </source>
</reference>
<proteinExistence type="evidence at protein level"/>
<gene>
    <name type="primary">FGA</name>
</gene>
<sequence length="19" mass="1852">EDGSDAVSGEFLAEGGGVR</sequence>
<evidence type="ECO:0000250" key="1">
    <source>
        <dbReference type="UniProtKB" id="E9PV24"/>
    </source>
</evidence>
<evidence type="ECO:0000250" key="2">
    <source>
        <dbReference type="UniProtKB" id="P02671"/>
    </source>
</evidence>
<comment type="function">
    <text evidence="1">Cleaved by the protease thrombin to yield monomers which, together with fibrinogen beta (FGB) and fibrinogen gamma (FGG), polymerize to form an insoluble fibrin matrix. Fibrin has a major function in hemostasis as one of the primary components of blood clots. In addition, functions during the early stages of wound repair to stabilize the lesion and guide cell migration during re-epithelialization. Was originally thought to be essential for platelet aggregation, based on in vitro studies using anticoagulated blood. However, subsequent studies have shown that it is not absolutely required for thrombus formation in vivo. Enhances expression of SELP in activated platelets via an ITGB3-dependent pathway. Maternal fibrinogen is essential for successful pregnancy. Fibrin deposition is also associated with infection, where it protects against IFNG-mediated hemorrhage. May also facilitate the immune response via both innate and T-cell mediated pathways.</text>
</comment>
<comment type="subunit">
    <text evidence="2">Heterohexamer; disulfide linked. Contains 2 sets of 3 non-identical chains (alpha, beta and gamma). The 2 heterotrimers are in head to head conformation with the N-termini in a small central domain (By similarity).</text>
</comment>
<comment type="subcellular location">
    <subcellularLocation>
        <location>Secreted</location>
    </subcellularLocation>
</comment>
<comment type="domain">
    <text evidence="2">A long coiled coil structure formed by 3 polypeptide chains connects the central nodule to the C-terminal domains (distal nodules). The long C-terminal ends of the alpha chains fold back, contributing a fourth strand to the coiled coil structure.</text>
</comment>
<comment type="PTM">
    <text>Conversion of fibrinogen to fibrin is triggered by thrombin, which cleaves fibrinopeptides A and B from alpha and beta chains, and thus exposes the N-terminal polymerization sites responsible for the formation of the soft clot. The soft clot is converted into the hard clot by factor XIIIA which catalyzes the epsilon-(gamma-glutamyl)lysine cross-linking between gamma chains (stronger) and between alpha chains (weaker) of different monomers.</text>
</comment>
<comment type="PTM">
    <text>Forms F13A-mediated cross-links between a glutamine and the epsilon-amino group of a lysine residue, forming fibronectin-fibrinogen heteropolymers.</text>
</comment>
<dbReference type="GO" id="GO:0005576">
    <property type="term" value="C:extracellular region"/>
    <property type="evidence" value="ECO:0007669"/>
    <property type="project" value="UniProtKB-SubCell"/>
</dbReference>
<dbReference type="GO" id="GO:0002250">
    <property type="term" value="P:adaptive immune response"/>
    <property type="evidence" value="ECO:0007669"/>
    <property type="project" value="UniProtKB-KW"/>
</dbReference>
<dbReference type="GO" id="GO:0007596">
    <property type="term" value="P:blood coagulation"/>
    <property type="evidence" value="ECO:0007669"/>
    <property type="project" value="UniProtKB-KW"/>
</dbReference>
<dbReference type="GO" id="GO:0045087">
    <property type="term" value="P:innate immune response"/>
    <property type="evidence" value="ECO:0007669"/>
    <property type="project" value="UniProtKB-KW"/>
</dbReference>
<protein>
    <recommendedName>
        <fullName>Fibrinogen alpha chain</fullName>
    </recommendedName>
    <component>
        <recommendedName>
            <fullName>Fibrinopeptide A</fullName>
        </recommendedName>
    </component>
</protein>
<feature type="peptide" id="PRO_0000009007" description="Fibrinopeptide A">
    <location>
        <begin position="1"/>
        <end position="19"/>
    </location>
</feature>
<feature type="sequence variant" description="In strain: Italian bred.">
    <original>S</original>
    <variation>G</variation>
    <location>
        <position position="8"/>
    </location>
</feature>
<feature type="non-terminal residue">
    <location>
        <position position="19"/>
    </location>
</feature>